<keyword id="KW-1017">Isopeptide bond</keyword>
<keyword id="KW-0507">mRNA processing</keyword>
<keyword id="KW-0508">mRNA splicing</keyword>
<keyword id="KW-0539">Nucleus</keyword>
<keyword id="KW-0597">Phosphoprotein</keyword>
<keyword id="KW-1185">Reference proteome</keyword>
<keyword id="KW-0687">Ribonucleoprotein</keyword>
<keyword id="KW-0694">RNA-binding</keyword>
<keyword id="KW-0832">Ubl conjugation</keyword>
<accession>D4AE41</accession>
<dbReference type="EMBL" id="AC136101">
    <property type="status" value="NOT_ANNOTATED_CDS"/>
    <property type="molecule type" value="Genomic_DNA"/>
</dbReference>
<dbReference type="BMRB" id="D4AE41"/>
<dbReference type="SMR" id="D4AE41"/>
<dbReference type="FunCoup" id="D4AE41">
    <property type="interactions" value="4"/>
</dbReference>
<dbReference type="IntAct" id="D4AE41">
    <property type="interactions" value="2"/>
</dbReference>
<dbReference type="MINT" id="D4AE41"/>
<dbReference type="STRING" id="10116.ENSRNOP00000074646"/>
<dbReference type="iPTMnet" id="D4AE41"/>
<dbReference type="PhosphoSitePlus" id="D4AE41"/>
<dbReference type="jPOST" id="D4AE41"/>
<dbReference type="PaxDb" id="10116-ENSRNOP00000057432"/>
<dbReference type="PeptideAtlas" id="D4AE41"/>
<dbReference type="UCSC" id="RGD:1585845">
    <property type="organism name" value="rat"/>
</dbReference>
<dbReference type="AGR" id="RGD:1585845"/>
<dbReference type="RGD" id="1585845">
    <property type="gene designation" value="Rbmxl1"/>
</dbReference>
<dbReference type="eggNOG" id="ENOG502QS9N">
    <property type="taxonomic scope" value="Eukaryota"/>
</dbReference>
<dbReference type="InParanoid" id="D4AE41"/>
<dbReference type="PhylomeDB" id="D4AE41"/>
<dbReference type="TreeFam" id="TF331833"/>
<dbReference type="PRO" id="PR:D4AE41"/>
<dbReference type="Proteomes" id="UP000002494">
    <property type="component" value="Unplaced"/>
</dbReference>
<dbReference type="GO" id="GO:0005681">
    <property type="term" value="C:spliceosomal complex"/>
    <property type="evidence" value="ECO:0000318"/>
    <property type="project" value="GO_Central"/>
</dbReference>
<dbReference type="GO" id="GO:0003723">
    <property type="term" value="F:RNA binding"/>
    <property type="evidence" value="ECO:0000318"/>
    <property type="project" value="GO_Central"/>
</dbReference>
<dbReference type="GO" id="GO:0006397">
    <property type="term" value="P:mRNA processing"/>
    <property type="evidence" value="ECO:0007669"/>
    <property type="project" value="UniProtKB-KW"/>
</dbReference>
<dbReference type="GO" id="GO:0048026">
    <property type="term" value="P:positive regulation of mRNA splicing, via spliceosome"/>
    <property type="evidence" value="ECO:0000318"/>
    <property type="project" value="GO_Central"/>
</dbReference>
<dbReference type="GO" id="GO:0008380">
    <property type="term" value="P:RNA splicing"/>
    <property type="evidence" value="ECO:0007669"/>
    <property type="project" value="UniProtKB-KW"/>
</dbReference>
<dbReference type="CDD" id="cd12382">
    <property type="entry name" value="RRM_RBMX_like"/>
    <property type="match status" value="1"/>
</dbReference>
<dbReference type="FunFam" id="3.30.70.330:FF:000119">
    <property type="entry name" value="RNA-binding motif protein, X chromosome"/>
    <property type="match status" value="1"/>
</dbReference>
<dbReference type="Gene3D" id="3.30.70.330">
    <property type="match status" value="1"/>
</dbReference>
<dbReference type="InterPro" id="IPR012677">
    <property type="entry name" value="Nucleotide-bd_a/b_plait_sf"/>
</dbReference>
<dbReference type="InterPro" id="IPR035979">
    <property type="entry name" value="RBD_domain_sf"/>
</dbReference>
<dbReference type="InterPro" id="IPR050441">
    <property type="entry name" value="RBM"/>
</dbReference>
<dbReference type="InterPro" id="IPR012604">
    <property type="entry name" value="RBM1CTR"/>
</dbReference>
<dbReference type="InterPro" id="IPR000504">
    <property type="entry name" value="RRM_dom"/>
</dbReference>
<dbReference type="InterPro" id="IPR003954">
    <property type="entry name" value="RRM_dom_euk"/>
</dbReference>
<dbReference type="PANTHER" id="PTHR48034">
    <property type="entry name" value="TRANSFORMER-2 SEX-DETERMINING PROTEIN-RELATED"/>
    <property type="match status" value="1"/>
</dbReference>
<dbReference type="Pfam" id="PF08081">
    <property type="entry name" value="RBM1CTR"/>
    <property type="match status" value="1"/>
</dbReference>
<dbReference type="Pfam" id="PF00076">
    <property type="entry name" value="RRM_1"/>
    <property type="match status" value="1"/>
</dbReference>
<dbReference type="SMART" id="SM00360">
    <property type="entry name" value="RRM"/>
    <property type="match status" value="1"/>
</dbReference>
<dbReference type="SMART" id="SM00361">
    <property type="entry name" value="RRM_1"/>
    <property type="match status" value="1"/>
</dbReference>
<dbReference type="SUPFAM" id="SSF54928">
    <property type="entry name" value="RNA-binding domain, RBD"/>
    <property type="match status" value="1"/>
</dbReference>
<dbReference type="PROSITE" id="PS50102">
    <property type="entry name" value="RRM"/>
    <property type="match status" value="1"/>
</dbReference>
<sequence length="388" mass="42250">MVEADRPGKLFIGGLNTETNEKALEAVFGKYGRIVEILLMKDRETNKSRGFAFVTFESPADAKDVARDMNGKSLDGKAIKVEQATKPSFESGRRGPPPPPRSRGPPRGLRGGSGGTRGPPSRGGYMDDGGYSMNFNMSSSRGPLPVKRGPPPRSGGPPPKRSTPSGPVRSSSGMGGRMPVSRGRDSYGGPPRREPLPSRRDVYLSPRDDGYSTKDSYSSRDYLSSRDTRDYAPPPRDYTYRDYSHSSSRDDYPSRGYGDRDGYGRDREYSDHPSGGSYRDSYESYGNSCSAPPTRGPPPSYGGSSRYDDYSSSRDGYGGSRDSYSSSRSDLYSSDRDRVGRQERGLPPSMERGYPPPRDFYSSSSRGAPRGGGRGGSRSDRGGGQKQI</sequence>
<protein>
    <recommendedName>
        <fullName>RNA binding motif protein, X-linked-like-1</fullName>
    </recommendedName>
    <alternativeName>
        <fullName>Heterogeneous nuclear ribonucleoprotein G-like 1</fullName>
    </alternativeName>
</protein>
<evidence type="ECO:0000250" key="1"/>
<evidence type="ECO:0000250" key="2">
    <source>
        <dbReference type="UniProtKB" id="Q96E39"/>
    </source>
</evidence>
<evidence type="ECO:0000255" key="3">
    <source>
        <dbReference type="PROSITE-ProRule" id="PRU00176"/>
    </source>
</evidence>
<evidence type="ECO:0000256" key="4">
    <source>
        <dbReference type="SAM" id="MobiDB-lite"/>
    </source>
</evidence>
<organism>
    <name type="scientific">Rattus norvegicus</name>
    <name type="common">Rat</name>
    <dbReference type="NCBI Taxonomy" id="10116"/>
    <lineage>
        <taxon>Eukaryota</taxon>
        <taxon>Metazoa</taxon>
        <taxon>Chordata</taxon>
        <taxon>Craniata</taxon>
        <taxon>Vertebrata</taxon>
        <taxon>Euteleostomi</taxon>
        <taxon>Mammalia</taxon>
        <taxon>Eutheria</taxon>
        <taxon>Euarchontoglires</taxon>
        <taxon>Glires</taxon>
        <taxon>Rodentia</taxon>
        <taxon>Myomorpha</taxon>
        <taxon>Muroidea</taxon>
        <taxon>Muridae</taxon>
        <taxon>Murinae</taxon>
        <taxon>Rattus</taxon>
    </lineage>
</organism>
<comment type="function">
    <text evidence="1">RNA-binding protein which may be involved in pre-mRNA splicing.</text>
</comment>
<comment type="subcellular location">
    <subcellularLocation>
        <location evidence="1">Nucleus</location>
    </subcellularLocation>
</comment>
<gene>
    <name type="primary">Rbmxl1</name>
</gene>
<feature type="chain" id="PRO_0000414745" description="RNA binding motif protein, X-linked-like-1">
    <location>
        <begin position="1"/>
        <end position="388"/>
    </location>
</feature>
<feature type="domain" description="RRM" evidence="3">
    <location>
        <begin position="8"/>
        <end position="86"/>
    </location>
</feature>
<feature type="region of interest" description="Disordered" evidence="4">
    <location>
        <begin position="61"/>
        <end position="388"/>
    </location>
</feature>
<feature type="compositionally biased region" description="Basic and acidic residues" evidence="4">
    <location>
        <begin position="61"/>
        <end position="80"/>
    </location>
</feature>
<feature type="compositionally biased region" description="Pro residues" evidence="4">
    <location>
        <begin position="148"/>
        <end position="161"/>
    </location>
</feature>
<feature type="compositionally biased region" description="Basic and acidic residues" evidence="4">
    <location>
        <begin position="191"/>
        <end position="212"/>
    </location>
</feature>
<feature type="compositionally biased region" description="Basic and acidic residues" evidence="4">
    <location>
        <begin position="238"/>
        <end position="271"/>
    </location>
</feature>
<feature type="compositionally biased region" description="Low complexity" evidence="4">
    <location>
        <begin position="320"/>
        <end position="332"/>
    </location>
</feature>
<feature type="compositionally biased region" description="Basic and acidic residues" evidence="4">
    <location>
        <begin position="333"/>
        <end position="344"/>
    </location>
</feature>
<feature type="compositionally biased region" description="Basic and acidic residues" evidence="4">
    <location>
        <begin position="377"/>
        <end position="388"/>
    </location>
</feature>
<feature type="modified residue" description="Phosphoserine" evidence="2">
    <location>
        <position position="88"/>
    </location>
</feature>
<feature type="cross-link" description="Glycyl lysine isopeptide (Lys-Gly) (interchain with G-Cter in SUMO2)" evidence="2">
    <location>
        <position position="80"/>
    </location>
</feature>
<proteinExistence type="inferred from homology"/>
<reference key="1">
    <citation type="journal article" date="2004" name="Nature">
        <title>Genome sequence of the Brown Norway rat yields insights into mammalian evolution.</title>
        <authorList>
            <person name="Gibbs R.A."/>
            <person name="Weinstock G.M."/>
            <person name="Metzker M.L."/>
            <person name="Muzny D.M."/>
            <person name="Sodergren E.J."/>
            <person name="Scherer S."/>
            <person name="Scott G."/>
            <person name="Steffen D."/>
            <person name="Worley K.C."/>
            <person name="Burch P.E."/>
            <person name="Okwuonu G."/>
            <person name="Hines S."/>
            <person name="Lewis L."/>
            <person name="Deramo C."/>
            <person name="Delgado O."/>
            <person name="Dugan-Rocha S."/>
            <person name="Miner G."/>
            <person name="Morgan M."/>
            <person name="Hawes A."/>
            <person name="Gill R."/>
            <person name="Holt R.A."/>
            <person name="Adams M.D."/>
            <person name="Amanatides P.G."/>
            <person name="Baden-Tillson H."/>
            <person name="Barnstead M."/>
            <person name="Chin S."/>
            <person name="Evans C.A."/>
            <person name="Ferriera S."/>
            <person name="Fosler C."/>
            <person name="Glodek A."/>
            <person name="Gu Z."/>
            <person name="Jennings D."/>
            <person name="Kraft C.L."/>
            <person name="Nguyen T."/>
            <person name="Pfannkoch C.M."/>
            <person name="Sitter C."/>
            <person name="Sutton G.G."/>
            <person name="Venter J.C."/>
            <person name="Woodage T."/>
            <person name="Smith D."/>
            <person name="Lee H.-M."/>
            <person name="Gustafson E."/>
            <person name="Cahill P."/>
            <person name="Kana A."/>
            <person name="Doucette-Stamm L."/>
            <person name="Weinstock K."/>
            <person name="Fechtel K."/>
            <person name="Weiss R.B."/>
            <person name="Dunn D.M."/>
            <person name="Green E.D."/>
            <person name="Blakesley R.W."/>
            <person name="Bouffard G.G."/>
            <person name="De Jong P.J."/>
            <person name="Osoegawa K."/>
            <person name="Zhu B."/>
            <person name="Marra M."/>
            <person name="Schein J."/>
            <person name="Bosdet I."/>
            <person name="Fjell C."/>
            <person name="Jones S."/>
            <person name="Krzywinski M."/>
            <person name="Mathewson C."/>
            <person name="Siddiqui A."/>
            <person name="Wye N."/>
            <person name="McPherson J."/>
            <person name="Zhao S."/>
            <person name="Fraser C.M."/>
            <person name="Shetty J."/>
            <person name="Shatsman S."/>
            <person name="Geer K."/>
            <person name="Chen Y."/>
            <person name="Abramzon S."/>
            <person name="Nierman W.C."/>
            <person name="Havlak P.H."/>
            <person name="Chen R."/>
            <person name="Durbin K.J."/>
            <person name="Egan A."/>
            <person name="Ren Y."/>
            <person name="Song X.-Z."/>
            <person name="Li B."/>
            <person name="Liu Y."/>
            <person name="Qin X."/>
            <person name="Cawley S."/>
            <person name="Cooney A.J."/>
            <person name="D'Souza L.M."/>
            <person name="Martin K."/>
            <person name="Wu J.Q."/>
            <person name="Gonzalez-Garay M.L."/>
            <person name="Jackson A.R."/>
            <person name="Kalafus K.J."/>
            <person name="McLeod M.P."/>
            <person name="Milosavljevic A."/>
            <person name="Virk D."/>
            <person name="Volkov A."/>
            <person name="Wheeler D.A."/>
            <person name="Zhang Z."/>
            <person name="Bailey J.A."/>
            <person name="Eichler E.E."/>
            <person name="Tuzun E."/>
            <person name="Birney E."/>
            <person name="Mongin E."/>
            <person name="Ureta-Vidal A."/>
            <person name="Woodwark C."/>
            <person name="Zdobnov E."/>
            <person name="Bork P."/>
            <person name="Suyama M."/>
            <person name="Torrents D."/>
            <person name="Alexandersson M."/>
            <person name="Trask B.J."/>
            <person name="Young J.M."/>
            <person name="Huang H."/>
            <person name="Wang H."/>
            <person name="Xing H."/>
            <person name="Daniels S."/>
            <person name="Gietzen D."/>
            <person name="Schmidt J."/>
            <person name="Stevens K."/>
            <person name="Vitt U."/>
            <person name="Wingrove J."/>
            <person name="Camara F."/>
            <person name="Mar Alba M."/>
            <person name="Abril J.F."/>
            <person name="Guigo R."/>
            <person name="Smit A."/>
            <person name="Dubchak I."/>
            <person name="Rubin E.M."/>
            <person name="Couronne O."/>
            <person name="Poliakov A."/>
            <person name="Huebner N."/>
            <person name="Ganten D."/>
            <person name="Goesele C."/>
            <person name="Hummel O."/>
            <person name="Kreitler T."/>
            <person name="Lee Y.-A."/>
            <person name="Monti J."/>
            <person name="Schulz H."/>
            <person name="Zimdahl H."/>
            <person name="Himmelbauer H."/>
            <person name="Lehrach H."/>
            <person name="Jacob H.J."/>
            <person name="Bromberg S."/>
            <person name="Gullings-Handley J."/>
            <person name="Jensen-Seaman M.I."/>
            <person name="Kwitek A.E."/>
            <person name="Lazar J."/>
            <person name="Pasko D."/>
            <person name="Tonellato P.J."/>
            <person name="Twigger S."/>
            <person name="Ponting C.P."/>
            <person name="Duarte J.M."/>
            <person name="Rice S."/>
            <person name="Goodstadt L."/>
            <person name="Beatson S.A."/>
            <person name="Emes R.D."/>
            <person name="Winter E.E."/>
            <person name="Webber C."/>
            <person name="Brandt P."/>
            <person name="Nyakatura G."/>
            <person name="Adetobi M."/>
            <person name="Chiaromonte F."/>
            <person name="Elnitski L."/>
            <person name="Eswara P."/>
            <person name="Hardison R.C."/>
            <person name="Hou M."/>
            <person name="Kolbe D."/>
            <person name="Makova K."/>
            <person name="Miller W."/>
            <person name="Nekrutenko A."/>
            <person name="Riemer C."/>
            <person name="Schwartz S."/>
            <person name="Taylor J."/>
            <person name="Yang S."/>
            <person name="Zhang Y."/>
            <person name="Lindpaintner K."/>
            <person name="Andrews T.D."/>
            <person name="Caccamo M."/>
            <person name="Clamp M."/>
            <person name="Clarke L."/>
            <person name="Curwen V."/>
            <person name="Durbin R.M."/>
            <person name="Eyras E."/>
            <person name="Searle S.M."/>
            <person name="Cooper G.M."/>
            <person name="Batzoglou S."/>
            <person name="Brudno M."/>
            <person name="Sidow A."/>
            <person name="Stone E.A."/>
            <person name="Payseur B.A."/>
            <person name="Bourque G."/>
            <person name="Lopez-Otin C."/>
            <person name="Puente X.S."/>
            <person name="Chakrabarti K."/>
            <person name="Chatterji S."/>
            <person name="Dewey C."/>
            <person name="Pachter L."/>
            <person name="Bray N."/>
            <person name="Yap V.B."/>
            <person name="Caspi A."/>
            <person name="Tesler G."/>
            <person name="Pevzner P.A."/>
            <person name="Haussler D."/>
            <person name="Roskin K.M."/>
            <person name="Baertsch R."/>
            <person name="Clawson H."/>
            <person name="Furey T.S."/>
            <person name="Hinrichs A.S."/>
            <person name="Karolchik D."/>
            <person name="Kent W.J."/>
            <person name="Rosenbloom K.R."/>
            <person name="Trumbower H."/>
            <person name="Weirauch M."/>
            <person name="Cooper D.N."/>
            <person name="Stenson P.D."/>
            <person name="Ma B."/>
            <person name="Brent M."/>
            <person name="Arumugam M."/>
            <person name="Shteynberg D."/>
            <person name="Copley R.R."/>
            <person name="Taylor M.S."/>
            <person name="Riethman H."/>
            <person name="Mudunuri U."/>
            <person name="Peterson J."/>
            <person name="Guyer M."/>
            <person name="Felsenfeld A."/>
            <person name="Old S."/>
            <person name="Mockrin S."/>
            <person name="Collins F.S."/>
        </authorList>
    </citation>
    <scope>NUCLEOTIDE SEQUENCE [LARGE SCALE GENOMIC DNA]</scope>
    <source>
        <strain>Brown Norway</strain>
    </source>
</reference>
<name>RMXL1_RAT</name>